<keyword id="KW-0067">ATP-binding</keyword>
<keyword id="KW-0963">Cytoplasm</keyword>
<keyword id="KW-0418">Kinase</keyword>
<keyword id="KW-0547">Nucleotide-binding</keyword>
<keyword id="KW-0539">Nucleus</keyword>
<keyword id="KW-0665">Pyrimidine biosynthesis</keyword>
<keyword id="KW-1185">Reference proteome</keyword>
<keyword id="KW-0808">Transferase</keyword>
<name>KCY_XENTR</name>
<evidence type="ECO:0000255" key="1">
    <source>
        <dbReference type="HAMAP-Rule" id="MF_03172"/>
    </source>
</evidence>
<evidence type="ECO:0000305" key="2"/>
<proteinExistence type="evidence at transcript level"/>
<protein>
    <recommendedName>
        <fullName evidence="1">UMP-CMP kinase</fullName>
        <ecNumber evidence="1">2.7.4.14</ecNumber>
    </recommendedName>
    <alternativeName>
        <fullName evidence="1">Deoxycytidylate kinase</fullName>
        <shortName evidence="1">CK</shortName>
        <shortName evidence="1">dCMP kinase</shortName>
    </alternativeName>
    <alternativeName>
        <fullName evidence="1">Nucleoside-diphosphate kinase</fullName>
        <ecNumber evidence="1">2.7.4.6</ecNumber>
    </alternativeName>
    <alternativeName>
        <fullName evidence="1">Uridine monophosphate/cytidine monophosphate kinase</fullName>
        <shortName evidence="1">UMP/CMP kinase</shortName>
        <shortName evidence="1">UMP/CMPK</shortName>
    </alternativeName>
</protein>
<reference key="1">
    <citation type="submission" date="2006-10" db="EMBL/GenBank/DDBJ databases">
        <authorList>
            <consortium name="Sanger Xenopus tropicalis EST/cDNA project"/>
        </authorList>
    </citation>
    <scope>NUCLEOTIDE SEQUENCE [LARGE SCALE MRNA]</scope>
    <source>
        <tissue>Egg</tissue>
    </source>
</reference>
<feature type="chain" id="PRO_0000292027" description="UMP-CMP kinase">
    <location>
        <begin position="1"/>
        <end position="196"/>
    </location>
</feature>
<feature type="region of interest" description="NMP" evidence="1">
    <location>
        <begin position="33"/>
        <end position="63"/>
    </location>
</feature>
<feature type="region of interest" description="LID" evidence="1">
    <location>
        <begin position="133"/>
        <end position="143"/>
    </location>
</feature>
<feature type="binding site" evidence="1">
    <location>
        <begin position="13"/>
        <end position="18"/>
    </location>
    <ligand>
        <name>ATP</name>
        <dbReference type="ChEBI" id="CHEBI:30616"/>
    </ligand>
</feature>
<feature type="binding site" evidence="1">
    <location>
        <position position="39"/>
    </location>
    <ligand>
        <name>a ribonucleoside 5'-phosphate</name>
        <dbReference type="ChEBI" id="CHEBI:58043"/>
    </ligand>
</feature>
<feature type="binding site" evidence="1">
    <location>
        <begin position="61"/>
        <end position="63"/>
    </location>
    <ligand>
        <name>a ribonucleoside 5'-phosphate</name>
        <dbReference type="ChEBI" id="CHEBI:58043"/>
    </ligand>
</feature>
<feature type="binding site" evidence="1">
    <location>
        <begin position="93"/>
        <end position="96"/>
    </location>
    <ligand>
        <name>a ribonucleoside 5'-phosphate</name>
        <dbReference type="ChEBI" id="CHEBI:58043"/>
    </ligand>
</feature>
<feature type="binding site" evidence="1">
    <location>
        <position position="100"/>
    </location>
    <ligand>
        <name>CMP</name>
        <dbReference type="ChEBI" id="CHEBI:60377"/>
    </ligand>
</feature>
<feature type="binding site" evidence="1">
    <location>
        <position position="134"/>
    </location>
    <ligand>
        <name>ATP</name>
        <dbReference type="ChEBI" id="CHEBI:30616"/>
    </ligand>
</feature>
<feature type="binding site" evidence="1">
    <location>
        <position position="140"/>
    </location>
    <ligand>
        <name>a ribonucleoside 5'-phosphate</name>
        <dbReference type="ChEBI" id="CHEBI:58043"/>
    </ligand>
</feature>
<feature type="binding site" evidence="1">
    <location>
        <position position="151"/>
    </location>
    <ligand>
        <name>a ribonucleoside 5'-phosphate</name>
        <dbReference type="ChEBI" id="CHEBI:58043"/>
    </ligand>
</feature>
<feature type="binding site" evidence="1">
    <location>
        <position position="179"/>
    </location>
    <ligand>
        <name>ATP</name>
        <dbReference type="ChEBI" id="CHEBI:30616"/>
    </ligand>
</feature>
<sequence>MKPFVVFVLGGPGAGKGTQCERIVQKYGYTHLSAGDLLRDERKKPDSQYGELIESYIRDGRIVPVEITISLLQRAMEQTMALDGNKHKFLIDGFPRNEDNLQGWERTMNGKADVSFVLFFDCDNETCIERCLERGKSSGRSDDNRESLEKRIQTYLQSTRPIIDLYEKTGKVKKVDASKSVDEVFTKVQDIFDREG</sequence>
<accession>Q28H12</accession>
<gene>
    <name type="primary">cmpk1</name>
    <name type="synonym">cmpk</name>
    <name type="ORF">TEgg001e20.1</name>
</gene>
<dbReference type="EC" id="2.7.4.14" evidence="1"/>
<dbReference type="EC" id="2.7.4.6" evidence="1"/>
<dbReference type="EMBL" id="CR761111">
    <property type="protein sequence ID" value="CAJ82118.1"/>
    <property type="status" value="ALT_INIT"/>
    <property type="molecule type" value="mRNA"/>
</dbReference>
<dbReference type="SMR" id="Q28H12"/>
<dbReference type="FunCoup" id="Q28H12">
    <property type="interactions" value="2866"/>
</dbReference>
<dbReference type="STRING" id="8364.ENSXETP00000012467"/>
<dbReference type="PaxDb" id="8364-ENSXETP00000035667"/>
<dbReference type="eggNOG" id="KOG3079">
    <property type="taxonomic scope" value="Eukaryota"/>
</dbReference>
<dbReference type="HOGENOM" id="CLU_032354_0_2_1"/>
<dbReference type="InParanoid" id="Q28H12"/>
<dbReference type="TreeFam" id="TF354283"/>
<dbReference type="Proteomes" id="UP000008143">
    <property type="component" value="Unplaced"/>
</dbReference>
<dbReference type="GO" id="GO:0005737">
    <property type="term" value="C:cytoplasm"/>
    <property type="evidence" value="ECO:0007669"/>
    <property type="project" value="UniProtKB-SubCell"/>
</dbReference>
<dbReference type="GO" id="GO:0005634">
    <property type="term" value="C:nucleus"/>
    <property type="evidence" value="ECO:0007669"/>
    <property type="project" value="UniProtKB-SubCell"/>
</dbReference>
<dbReference type="GO" id="GO:0005524">
    <property type="term" value="F:ATP binding"/>
    <property type="evidence" value="ECO:0007669"/>
    <property type="project" value="UniProtKB-KW"/>
</dbReference>
<dbReference type="GO" id="GO:0036430">
    <property type="term" value="F:CMP kinase activity"/>
    <property type="evidence" value="ECO:0007669"/>
    <property type="project" value="RHEA"/>
</dbReference>
<dbReference type="GO" id="GO:0036431">
    <property type="term" value="F:dCMP kinase activity"/>
    <property type="evidence" value="ECO:0007669"/>
    <property type="project" value="RHEA"/>
</dbReference>
<dbReference type="GO" id="GO:0004550">
    <property type="term" value="F:nucleoside diphosphate kinase activity"/>
    <property type="evidence" value="ECO:0000250"/>
    <property type="project" value="UniProtKB"/>
</dbReference>
<dbReference type="GO" id="GO:0033862">
    <property type="term" value="F:UMP kinase activity"/>
    <property type="evidence" value="ECO:0007669"/>
    <property type="project" value="RHEA"/>
</dbReference>
<dbReference type="GO" id="GO:0006207">
    <property type="term" value="P:'de novo' pyrimidine nucleobase biosynthetic process"/>
    <property type="evidence" value="ECO:0007669"/>
    <property type="project" value="InterPro"/>
</dbReference>
<dbReference type="GO" id="GO:0006221">
    <property type="term" value="P:pyrimidine nucleotide biosynthetic process"/>
    <property type="evidence" value="ECO:0007669"/>
    <property type="project" value="UniProtKB-UniRule"/>
</dbReference>
<dbReference type="CDD" id="cd01428">
    <property type="entry name" value="ADK"/>
    <property type="match status" value="1"/>
</dbReference>
<dbReference type="FunFam" id="3.40.50.300:FF:000315">
    <property type="entry name" value="Adenylate kinase 1"/>
    <property type="match status" value="1"/>
</dbReference>
<dbReference type="Gene3D" id="3.40.50.300">
    <property type="entry name" value="P-loop containing nucleotide triphosphate hydrolases"/>
    <property type="match status" value="1"/>
</dbReference>
<dbReference type="HAMAP" id="MF_00235">
    <property type="entry name" value="Adenylate_kinase_Adk"/>
    <property type="match status" value="1"/>
</dbReference>
<dbReference type="HAMAP" id="MF_03172">
    <property type="entry name" value="Adenylate_kinase_UMP_CMP_kin"/>
    <property type="match status" value="1"/>
</dbReference>
<dbReference type="InterPro" id="IPR000850">
    <property type="entry name" value="Adenylat/UMP-CMP_kin"/>
</dbReference>
<dbReference type="InterPro" id="IPR033690">
    <property type="entry name" value="Adenylat_kinase_CS"/>
</dbReference>
<dbReference type="InterPro" id="IPR027417">
    <property type="entry name" value="P-loop_NTPase"/>
</dbReference>
<dbReference type="InterPro" id="IPR006266">
    <property type="entry name" value="UMP_CMP_kinase"/>
</dbReference>
<dbReference type="NCBIfam" id="TIGR01359">
    <property type="entry name" value="UMP_CMP_kin_fam"/>
    <property type="match status" value="1"/>
</dbReference>
<dbReference type="PANTHER" id="PTHR23359">
    <property type="entry name" value="NUCLEOTIDE KINASE"/>
    <property type="match status" value="1"/>
</dbReference>
<dbReference type="Pfam" id="PF00406">
    <property type="entry name" value="ADK"/>
    <property type="match status" value="1"/>
</dbReference>
<dbReference type="PRINTS" id="PR00094">
    <property type="entry name" value="ADENYLTKNASE"/>
</dbReference>
<dbReference type="SUPFAM" id="SSF52540">
    <property type="entry name" value="P-loop containing nucleoside triphosphate hydrolases"/>
    <property type="match status" value="1"/>
</dbReference>
<dbReference type="PROSITE" id="PS00113">
    <property type="entry name" value="ADENYLATE_KINASE"/>
    <property type="match status" value="1"/>
</dbReference>
<comment type="function">
    <text evidence="1">Catalyzes the phosphorylation of pyrimidine nucleoside monophosphates at the expense of ATP. Plays an important role in de novo pyrimidine nucleotide biosynthesis. Has preference for UMP and CMP as phosphate acceptors. Also displays broad nucleoside diphosphate kinase activity.</text>
</comment>
<comment type="catalytic activity">
    <reaction evidence="1">
        <text>CMP + ATP = CDP + ADP</text>
        <dbReference type="Rhea" id="RHEA:11600"/>
        <dbReference type="ChEBI" id="CHEBI:30616"/>
        <dbReference type="ChEBI" id="CHEBI:58069"/>
        <dbReference type="ChEBI" id="CHEBI:60377"/>
        <dbReference type="ChEBI" id="CHEBI:456216"/>
        <dbReference type="EC" id="2.7.4.14"/>
    </reaction>
</comment>
<comment type="catalytic activity">
    <reaction evidence="1">
        <text>dCMP + ATP = dCDP + ADP</text>
        <dbReference type="Rhea" id="RHEA:25094"/>
        <dbReference type="ChEBI" id="CHEBI:30616"/>
        <dbReference type="ChEBI" id="CHEBI:57566"/>
        <dbReference type="ChEBI" id="CHEBI:58593"/>
        <dbReference type="ChEBI" id="CHEBI:456216"/>
        <dbReference type="EC" id="2.7.4.14"/>
    </reaction>
</comment>
<comment type="catalytic activity">
    <reaction evidence="1">
        <text>UMP + ATP = UDP + ADP</text>
        <dbReference type="Rhea" id="RHEA:24400"/>
        <dbReference type="ChEBI" id="CHEBI:30616"/>
        <dbReference type="ChEBI" id="CHEBI:57865"/>
        <dbReference type="ChEBI" id="CHEBI:58223"/>
        <dbReference type="ChEBI" id="CHEBI:456216"/>
        <dbReference type="EC" id="2.7.4.14"/>
    </reaction>
</comment>
<comment type="catalytic activity">
    <reaction evidence="1">
        <text>a 2'-deoxyribonucleoside 5'-diphosphate + ATP = a 2'-deoxyribonucleoside 5'-triphosphate + ADP</text>
        <dbReference type="Rhea" id="RHEA:44640"/>
        <dbReference type="ChEBI" id="CHEBI:30616"/>
        <dbReference type="ChEBI" id="CHEBI:61560"/>
        <dbReference type="ChEBI" id="CHEBI:73316"/>
        <dbReference type="ChEBI" id="CHEBI:456216"/>
        <dbReference type="EC" id="2.7.4.6"/>
    </reaction>
</comment>
<comment type="catalytic activity">
    <reaction evidence="1">
        <text>a ribonucleoside 5'-diphosphate + ATP = a ribonucleoside 5'-triphosphate + ADP</text>
        <dbReference type="Rhea" id="RHEA:18113"/>
        <dbReference type="ChEBI" id="CHEBI:30616"/>
        <dbReference type="ChEBI" id="CHEBI:57930"/>
        <dbReference type="ChEBI" id="CHEBI:61557"/>
        <dbReference type="ChEBI" id="CHEBI:456216"/>
        <dbReference type="EC" id="2.7.4.6"/>
    </reaction>
</comment>
<comment type="cofactor">
    <cofactor evidence="1">
        <name>Mg(2+)</name>
        <dbReference type="ChEBI" id="CHEBI:18420"/>
    </cofactor>
    <text evidence="1">Binds 1 Mg(2+) ion per monomer.</text>
</comment>
<comment type="subunit">
    <text evidence="1">Monomer.</text>
</comment>
<comment type="subcellular location">
    <subcellularLocation>
        <location evidence="1">Cytoplasm</location>
    </subcellularLocation>
    <subcellularLocation>
        <location evidence="1">Nucleus</location>
    </subcellularLocation>
</comment>
<comment type="domain">
    <text evidence="1">Consists of three domains, a large central CORE domain and two small peripheral domains, NMPbind and LID, which undergo movements during catalysis. The LID domain closes over the site of phosphoryl transfer upon ATP binding. Assembling and dissambling the active center during each catalytic cycle provides an effective means to prevent ATP hydrolysis.</text>
</comment>
<comment type="similarity">
    <text evidence="1">Belongs to the adenylate kinase family. UMP-CMP kinase subfamily.</text>
</comment>
<comment type="sequence caution" evidence="2">
    <conflict type="erroneous initiation">
        <sequence resource="EMBL-CDS" id="CAJ82118"/>
    </conflict>
</comment>
<organism>
    <name type="scientific">Xenopus tropicalis</name>
    <name type="common">Western clawed frog</name>
    <name type="synonym">Silurana tropicalis</name>
    <dbReference type="NCBI Taxonomy" id="8364"/>
    <lineage>
        <taxon>Eukaryota</taxon>
        <taxon>Metazoa</taxon>
        <taxon>Chordata</taxon>
        <taxon>Craniata</taxon>
        <taxon>Vertebrata</taxon>
        <taxon>Euteleostomi</taxon>
        <taxon>Amphibia</taxon>
        <taxon>Batrachia</taxon>
        <taxon>Anura</taxon>
        <taxon>Pipoidea</taxon>
        <taxon>Pipidae</taxon>
        <taxon>Xenopodinae</taxon>
        <taxon>Xenopus</taxon>
        <taxon>Silurana</taxon>
    </lineage>
</organism>